<organism>
    <name type="scientific">Neisseria meningitidis serogroup B (strain ATCC BAA-335 / MC58)</name>
    <dbReference type="NCBI Taxonomy" id="122586"/>
    <lineage>
        <taxon>Bacteria</taxon>
        <taxon>Pseudomonadati</taxon>
        <taxon>Pseudomonadota</taxon>
        <taxon>Betaproteobacteria</taxon>
        <taxon>Neisseriales</taxon>
        <taxon>Neisseriaceae</taxon>
        <taxon>Neisseria</taxon>
    </lineage>
</organism>
<feature type="chain" id="PRO_0000381052" description="Putative 8-amino-7-oxononanoate synthase">
    <location>
        <begin position="1"/>
        <end position="380"/>
    </location>
</feature>
<feature type="binding site" evidence="1">
    <location>
        <position position="18"/>
    </location>
    <ligand>
        <name>substrate</name>
    </ligand>
</feature>
<feature type="binding site" evidence="1">
    <location>
        <begin position="106"/>
        <end position="107"/>
    </location>
    <ligand>
        <name>pyridoxal 5'-phosphate</name>
        <dbReference type="ChEBI" id="CHEBI:597326"/>
    </ligand>
</feature>
<feature type="binding site" evidence="1">
    <location>
        <position position="131"/>
    </location>
    <ligand>
        <name>substrate</name>
    </ligand>
</feature>
<feature type="binding site" evidence="1">
    <location>
        <position position="179"/>
    </location>
    <ligand>
        <name>pyridoxal 5'-phosphate</name>
        <dbReference type="ChEBI" id="CHEBI:597326"/>
    </ligand>
</feature>
<feature type="binding site" evidence="1">
    <location>
        <begin position="205"/>
        <end position="208"/>
    </location>
    <ligand>
        <name>pyridoxal 5'-phosphate</name>
        <dbReference type="ChEBI" id="CHEBI:597326"/>
    </ligand>
</feature>
<feature type="binding site" evidence="1">
    <location>
        <begin position="236"/>
        <end position="239"/>
    </location>
    <ligand>
        <name>pyridoxal 5'-phosphate</name>
        <dbReference type="ChEBI" id="CHEBI:597326"/>
    </ligand>
</feature>
<feature type="binding site" evidence="1">
    <location>
        <position position="352"/>
    </location>
    <ligand>
        <name>substrate</name>
    </ligand>
</feature>
<feature type="modified residue" description="N6-(pyridoxal phosphate)lysine" evidence="1">
    <location>
        <position position="239"/>
    </location>
</feature>
<evidence type="ECO:0000250" key="1"/>
<evidence type="ECO:0000305" key="2"/>
<gene>
    <name type="primary">bioF</name>
    <name type="ordered locus">NMB0472</name>
</gene>
<reference key="1">
    <citation type="journal article" date="2000" name="Science">
        <title>Complete genome sequence of Neisseria meningitidis serogroup B strain MC58.</title>
        <authorList>
            <person name="Tettelin H."/>
            <person name="Saunders N.J."/>
            <person name="Heidelberg J.F."/>
            <person name="Jeffries A.C."/>
            <person name="Nelson K.E."/>
            <person name="Eisen J.A."/>
            <person name="Ketchum K.A."/>
            <person name="Hood D.W."/>
            <person name="Peden J.F."/>
            <person name="Dodson R.J."/>
            <person name="Nelson W.C."/>
            <person name="Gwinn M.L."/>
            <person name="DeBoy R.T."/>
            <person name="Peterson J.D."/>
            <person name="Hickey E.K."/>
            <person name="Haft D.H."/>
            <person name="Salzberg S.L."/>
            <person name="White O."/>
            <person name="Fleischmann R.D."/>
            <person name="Dougherty B.A."/>
            <person name="Mason T.M."/>
            <person name="Ciecko A."/>
            <person name="Parksey D.S."/>
            <person name="Blair E."/>
            <person name="Cittone H."/>
            <person name="Clark E.B."/>
            <person name="Cotton M.D."/>
            <person name="Utterback T.R."/>
            <person name="Khouri H.M."/>
            <person name="Qin H."/>
            <person name="Vamathevan J.J."/>
            <person name="Gill J."/>
            <person name="Scarlato V."/>
            <person name="Masignani V."/>
            <person name="Pizza M."/>
            <person name="Grandi G."/>
            <person name="Sun L."/>
            <person name="Smith H.O."/>
            <person name="Fraser C.M."/>
            <person name="Moxon E.R."/>
            <person name="Rappuoli R."/>
            <person name="Venter J.C."/>
        </authorList>
    </citation>
    <scope>NUCLEOTIDE SEQUENCE [LARGE SCALE GENOMIC DNA]</scope>
    <source>
        <strain>ATCC BAA-335 / MC58</strain>
    </source>
</reference>
<accession>Q9K0U0</accession>
<comment type="function">
    <text evidence="1">Catalyzes the decarboxylative condensation of pimeloyl-[acyl-carrier protein] and L-alanine to produce 8-amino-7-oxononanoate (AON), [acyl-carrier protein], and carbon dioxide.</text>
</comment>
<comment type="catalytic activity">
    <reaction>
        <text>6-carboxyhexanoyl-[ACP] + L-alanine + H(+) = (8S)-8-amino-7-oxononanoate + holo-[ACP] + CO2</text>
        <dbReference type="Rhea" id="RHEA:42288"/>
        <dbReference type="Rhea" id="RHEA-COMP:9685"/>
        <dbReference type="Rhea" id="RHEA-COMP:9955"/>
        <dbReference type="ChEBI" id="CHEBI:15378"/>
        <dbReference type="ChEBI" id="CHEBI:16526"/>
        <dbReference type="ChEBI" id="CHEBI:57972"/>
        <dbReference type="ChEBI" id="CHEBI:64479"/>
        <dbReference type="ChEBI" id="CHEBI:78846"/>
        <dbReference type="ChEBI" id="CHEBI:149468"/>
        <dbReference type="EC" id="2.3.1.47"/>
    </reaction>
</comment>
<comment type="cofactor">
    <cofactor evidence="1">
        <name>pyridoxal 5'-phosphate</name>
        <dbReference type="ChEBI" id="CHEBI:597326"/>
    </cofactor>
</comment>
<comment type="pathway">
    <text>Cofactor biosynthesis; biotin biosynthesis.</text>
</comment>
<comment type="subunit">
    <text evidence="1">Homodimer.</text>
</comment>
<comment type="similarity">
    <text evidence="2">Belongs to the class-II pyridoxal-phosphate-dependent aminotransferase family. BioF subfamily.</text>
</comment>
<name>BIOF_NEIMB</name>
<dbReference type="EC" id="2.3.1.47"/>
<dbReference type="EMBL" id="AE002098">
    <property type="protein sequence ID" value="AAF40909.1"/>
    <property type="molecule type" value="Genomic_DNA"/>
</dbReference>
<dbReference type="PIR" id="C81194">
    <property type="entry name" value="C81194"/>
</dbReference>
<dbReference type="RefSeq" id="NP_273519.1">
    <property type="nucleotide sequence ID" value="NC_003112.2"/>
</dbReference>
<dbReference type="RefSeq" id="WP_002224951.1">
    <property type="nucleotide sequence ID" value="NC_003112.2"/>
</dbReference>
<dbReference type="SMR" id="Q9K0U0"/>
<dbReference type="FunCoup" id="Q9K0U0">
    <property type="interactions" value="193"/>
</dbReference>
<dbReference type="STRING" id="122586.NMB0472"/>
<dbReference type="PaxDb" id="122586-NMB0472"/>
<dbReference type="KEGG" id="nme:NMB0472"/>
<dbReference type="PATRIC" id="fig|122586.8.peg.619"/>
<dbReference type="HOGENOM" id="CLU_015846_11_2_4"/>
<dbReference type="InParanoid" id="Q9K0U0"/>
<dbReference type="OrthoDB" id="9807157at2"/>
<dbReference type="UniPathway" id="UPA00078"/>
<dbReference type="Proteomes" id="UP000000425">
    <property type="component" value="Chromosome"/>
</dbReference>
<dbReference type="GO" id="GO:0008710">
    <property type="term" value="F:8-amino-7-oxononanoate synthase activity"/>
    <property type="evidence" value="ECO:0000318"/>
    <property type="project" value="GO_Central"/>
</dbReference>
<dbReference type="GO" id="GO:0030170">
    <property type="term" value="F:pyridoxal phosphate binding"/>
    <property type="evidence" value="ECO:0007669"/>
    <property type="project" value="InterPro"/>
</dbReference>
<dbReference type="GO" id="GO:0009102">
    <property type="term" value="P:biotin biosynthetic process"/>
    <property type="evidence" value="ECO:0000318"/>
    <property type="project" value="GO_Central"/>
</dbReference>
<dbReference type="CDD" id="cd06454">
    <property type="entry name" value="KBL_like"/>
    <property type="match status" value="1"/>
</dbReference>
<dbReference type="Gene3D" id="3.90.1150.10">
    <property type="entry name" value="Aspartate Aminotransferase, domain 1"/>
    <property type="match status" value="1"/>
</dbReference>
<dbReference type="Gene3D" id="3.40.640.10">
    <property type="entry name" value="Type I PLP-dependent aspartate aminotransferase-like (Major domain)"/>
    <property type="match status" value="1"/>
</dbReference>
<dbReference type="InterPro" id="IPR001917">
    <property type="entry name" value="Aminotrans_II_pyridoxalP_BS"/>
</dbReference>
<dbReference type="InterPro" id="IPR004839">
    <property type="entry name" value="Aminotransferase_I/II_large"/>
</dbReference>
<dbReference type="InterPro" id="IPR050087">
    <property type="entry name" value="AON_synthase_class-II"/>
</dbReference>
<dbReference type="InterPro" id="IPR004723">
    <property type="entry name" value="AONS_Archaea/Proteobacteria"/>
</dbReference>
<dbReference type="InterPro" id="IPR015424">
    <property type="entry name" value="PyrdxlP-dep_Trfase"/>
</dbReference>
<dbReference type="InterPro" id="IPR015421">
    <property type="entry name" value="PyrdxlP-dep_Trfase_major"/>
</dbReference>
<dbReference type="InterPro" id="IPR015422">
    <property type="entry name" value="PyrdxlP-dep_Trfase_small"/>
</dbReference>
<dbReference type="NCBIfam" id="TIGR00858">
    <property type="entry name" value="bioF"/>
    <property type="match status" value="1"/>
</dbReference>
<dbReference type="PANTHER" id="PTHR13693:SF100">
    <property type="entry name" value="8-AMINO-7-OXONONANOATE SYNTHASE"/>
    <property type="match status" value="1"/>
</dbReference>
<dbReference type="PANTHER" id="PTHR13693">
    <property type="entry name" value="CLASS II AMINOTRANSFERASE/8-AMINO-7-OXONONANOATE SYNTHASE"/>
    <property type="match status" value="1"/>
</dbReference>
<dbReference type="Pfam" id="PF00155">
    <property type="entry name" value="Aminotran_1_2"/>
    <property type="match status" value="1"/>
</dbReference>
<dbReference type="SUPFAM" id="SSF53383">
    <property type="entry name" value="PLP-dependent transferases"/>
    <property type="match status" value="1"/>
</dbReference>
<dbReference type="PROSITE" id="PS00599">
    <property type="entry name" value="AA_TRANSFER_CLASS_2"/>
    <property type="match status" value="1"/>
</dbReference>
<keyword id="KW-0093">Biotin biosynthesis</keyword>
<keyword id="KW-0663">Pyridoxal phosphate</keyword>
<keyword id="KW-1185">Reference proteome</keyword>
<keyword id="KW-0808">Transferase</keyword>
<proteinExistence type="inferred from homology"/>
<sequence>MKVFKQQLEQLGAQNQYRSIPDLIHQGRYITRENRKMLNMSSNDYLGLASDENLRRSFLQQYGGNFPSFTSSSSRLLTGNFPIYTDLEELVAQRFQRESALLFNSGYHANLGILPALTTTKSLILADKFVHASMIDGIRLSRCAFFRYRHNDYEHLKNLLEKNVGKFDRTFIVTESVFSMDGDVADLKQLVQLKKQFPNTYLYVDEAHAIGVYGQNGLGIAERDNLIAEIDLLVGTFGKALASVGAYAVCNQVLKECLINQMRPLIFSTALPPFNVAWTYFIFERLPQFSKERSHLEQLSAFLRREVAHRTQIMPSQTCIVPYILGGNEATLAKAEYLQRQGYYCLPIRPSTVPKNTSRIRLSLTADMTTDEVRQFAACL</sequence>
<protein>
    <recommendedName>
        <fullName>Putative 8-amino-7-oxononanoate synthase</fullName>
        <shortName>AONS</shortName>
        <ecNumber>2.3.1.47</ecNumber>
    </recommendedName>
    <alternativeName>
        <fullName>7-keto-8-amino-pelargonic acid synthase</fullName>
        <shortName>7-KAP synthase</shortName>
    </alternativeName>
    <alternativeName>
        <fullName>8-amino-7-ketopelargonate synthase</fullName>
    </alternativeName>
</protein>